<gene>
    <name evidence="6" type="primary">CXE20</name>
    <name evidence="9" type="ordered locus">At5g62180</name>
    <name evidence="10" type="ORF">MMI9.26</name>
</gene>
<sequence length="327" mass="36182">MSEPSPIADPYAYLNIVNNPDGSITRDLSNFPCTAATPDPSPLNPAVSKDLPVNQLKSTWLRLYLPSSAVNEGNVSSQKLPIVVYYHGGGFILCSVDMQLFHDFCSEVARDLNAIVVSPSYRLAPEHRLPAAYDDGVEALDWIKTSDDEWIKSHADFSNVFLMGTSAGGNLAYNVGLRSVDSVSDLSPLQIRGLILHHPFFGGEERSESEIRLMNDQVCPPIVTDVMWDLSLPVGVDRDHEYSNPTVGDGSEKLEKIGRLRWKVMMIGGEDDPMIDLQKDVAKLMKKKGVEVVEHYTGGHVHGAEIRDPSKRKTLFLSIKNFIFSVL</sequence>
<reference key="1">
    <citation type="journal article" date="2000" name="DNA Res.">
        <title>Structural analysis of Arabidopsis thaliana chromosome 5. X. Sequence features of the regions of 3,076,755 bp covered by sixty P1 and TAC clones.</title>
        <authorList>
            <person name="Sato S."/>
            <person name="Nakamura Y."/>
            <person name="Kaneko T."/>
            <person name="Katoh T."/>
            <person name="Asamizu E."/>
            <person name="Kotani H."/>
            <person name="Tabata S."/>
        </authorList>
    </citation>
    <scope>NUCLEOTIDE SEQUENCE [LARGE SCALE GENOMIC DNA]</scope>
    <source>
        <strain>cv. Columbia</strain>
    </source>
</reference>
<reference key="2">
    <citation type="journal article" date="2017" name="Plant J.">
        <title>Araport11: a complete reannotation of the Arabidopsis thaliana reference genome.</title>
        <authorList>
            <person name="Cheng C.Y."/>
            <person name="Krishnakumar V."/>
            <person name="Chan A.P."/>
            <person name="Thibaud-Nissen F."/>
            <person name="Schobel S."/>
            <person name="Town C.D."/>
        </authorList>
    </citation>
    <scope>GENOME REANNOTATION</scope>
    <source>
        <strain>cv. Columbia</strain>
    </source>
</reference>
<reference key="3">
    <citation type="journal article" date="2003" name="J. Mol. Evol.">
        <title>The carboxylesterase gene family from Arabidopsis thaliana.</title>
        <authorList>
            <person name="Marshall S.D."/>
            <person name="Putterill J.J."/>
            <person name="Plummer K.M."/>
            <person name="Newcomb R.D."/>
        </authorList>
    </citation>
    <scope>TISSUE SPECIFICITY</scope>
    <scope>GENE FAMILY</scope>
    <scope>NOMENCLATURE</scope>
</reference>
<reference key="4">
    <citation type="journal article" date="2021" name="Front. Plant Sci.">
        <title>Arabidopsis carboxylesterase 20 binds strigolactone and increases branches and tillers when ectopically expressed in Arabidopsis and maize.</title>
        <authorList>
            <person name="Roesler K."/>
            <person name="Lu C."/>
            <person name="Thomas J."/>
            <person name="Xu Q."/>
            <person name="Vance P."/>
            <person name="Hou Z."/>
            <person name="Williams R.W."/>
            <person name="Liu L."/>
            <person name="Owens M.A."/>
            <person name="Habben J.E."/>
        </authorList>
    </citation>
    <scope>FUNCTION</scope>
    <scope>CATALYTIC ACTIVITY</scope>
    <scope>ACTIVITY REGULATION</scope>
    <scope>BIOPHYSICOCHEMICAL PROPERTIES</scope>
</reference>
<reference key="5">
    <citation type="journal article" date="2024" name="Nat. Commun.">
        <title>Structural insights into strigolactone catabolism by carboxylesterases reveal a conserved conformational regulation.</title>
        <authorList>
            <person name="Palayam M."/>
            <person name="Yan L."/>
            <person name="Nagalakshmi U."/>
            <person name="Gilio A.K."/>
            <person name="Cornu D."/>
            <person name="Boyer F.D."/>
            <person name="Dinesh-Kumar S.P."/>
            <person name="Shabek N."/>
        </authorList>
    </citation>
    <scope>X-RAY CRYSTALLOGRAPHY (1.85 ANGSTROMS)</scope>
</reference>
<name>CXE20_ARATH</name>
<feature type="chain" id="PRO_0000402563" description="Carboxylesterase 20">
    <location>
        <begin position="1"/>
        <end position="327"/>
    </location>
</feature>
<feature type="short sequence motif" description="Involved in the stabilization of the negatively charged intermediate by the formation of the oxyanion hole" evidence="1">
    <location>
        <begin position="87"/>
        <end position="89"/>
    </location>
</feature>
<feature type="active site" description="Nucleophile" evidence="2">
    <location>
        <position position="166"/>
    </location>
</feature>
<feature type="active site" evidence="2">
    <location>
        <position position="272"/>
    </location>
</feature>
<feature type="active site" evidence="1">
    <location>
        <position position="302"/>
    </location>
</feature>
<feature type="helix" evidence="11">
    <location>
        <begin position="10"/>
        <end position="14"/>
    </location>
</feature>
<feature type="strand" evidence="11">
    <location>
        <begin position="16"/>
        <end position="18"/>
    </location>
</feature>
<feature type="strand" evidence="11">
    <location>
        <begin position="24"/>
        <end position="26"/>
    </location>
</feature>
<feature type="helix" evidence="11">
    <location>
        <begin position="28"/>
        <end position="30"/>
    </location>
</feature>
<feature type="strand" evidence="11">
    <location>
        <begin position="45"/>
        <end position="54"/>
    </location>
</feature>
<feature type="turn" evidence="11">
    <location>
        <begin position="55"/>
        <end position="58"/>
    </location>
</feature>
<feature type="strand" evidence="11">
    <location>
        <begin position="59"/>
        <end position="66"/>
    </location>
</feature>
<feature type="helix" evidence="11">
    <location>
        <begin position="67"/>
        <end position="69"/>
    </location>
</feature>
<feature type="strand" evidence="11">
    <location>
        <begin position="80"/>
        <end position="86"/>
    </location>
</feature>
<feature type="turn" evidence="11">
    <location>
        <begin position="90"/>
        <end position="92"/>
    </location>
</feature>
<feature type="helix" evidence="11">
    <location>
        <begin position="99"/>
        <end position="112"/>
    </location>
</feature>
<feature type="strand" evidence="11">
    <location>
        <begin position="115"/>
        <end position="119"/>
    </location>
</feature>
<feature type="turn" evidence="11">
    <location>
        <begin position="124"/>
        <end position="127"/>
    </location>
</feature>
<feature type="helix" evidence="11">
    <location>
        <begin position="131"/>
        <end position="145"/>
    </location>
</feature>
<feature type="helix" evidence="11">
    <location>
        <begin position="149"/>
        <end position="154"/>
    </location>
</feature>
<feature type="strand" evidence="11">
    <location>
        <begin position="155"/>
        <end position="165"/>
    </location>
</feature>
<feature type="helix" evidence="11">
    <location>
        <begin position="167"/>
        <end position="180"/>
    </location>
</feature>
<feature type="helix" evidence="11">
    <location>
        <begin position="183"/>
        <end position="186"/>
    </location>
</feature>
<feature type="strand" evidence="11">
    <location>
        <begin position="191"/>
        <end position="198"/>
    </location>
</feature>
<feature type="helix" evidence="11">
    <location>
        <begin position="208"/>
        <end position="212"/>
    </location>
</feature>
<feature type="turn" evidence="11">
    <location>
        <begin position="213"/>
        <end position="215"/>
    </location>
</feature>
<feature type="strand" evidence="11">
    <location>
        <begin position="217"/>
        <end position="219"/>
    </location>
</feature>
<feature type="helix" evidence="11">
    <location>
        <begin position="221"/>
        <end position="231"/>
    </location>
</feature>
<feature type="turn" evidence="11">
    <location>
        <begin position="241"/>
        <end position="243"/>
    </location>
</feature>
<feature type="helix" evidence="11">
    <location>
        <begin position="254"/>
        <end position="259"/>
    </location>
</feature>
<feature type="strand" evidence="11">
    <location>
        <begin position="263"/>
        <end position="269"/>
    </location>
</feature>
<feature type="helix" evidence="11">
    <location>
        <begin position="275"/>
        <end position="287"/>
    </location>
</feature>
<feature type="strand" evidence="11">
    <location>
        <begin position="292"/>
        <end position="297"/>
    </location>
</feature>
<feature type="helix" evidence="11">
    <location>
        <begin position="304"/>
        <end position="307"/>
    </location>
</feature>
<feature type="helix" evidence="11">
    <location>
        <begin position="309"/>
        <end position="311"/>
    </location>
</feature>
<feature type="helix" evidence="11">
    <location>
        <begin position="312"/>
        <end position="324"/>
    </location>
</feature>
<organism>
    <name type="scientific">Arabidopsis thaliana</name>
    <name type="common">Mouse-ear cress</name>
    <dbReference type="NCBI Taxonomy" id="3702"/>
    <lineage>
        <taxon>Eukaryota</taxon>
        <taxon>Viridiplantae</taxon>
        <taxon>Streptophyta</taxon>
        <taxon>Embryophyta</taxon>
        <taxon>Tracheophyta</taxon>
        <taxon>Spermatophyta</taxon>
        <taxon>Magnoliopsida</taxon>
        <taxon>eudicotyledons</taxon>
        <taxon>Gunneridae</taxon>
        <taxon>Pentapetalae</taxon>
        <taxon>rosids</taxon>
        <taxon>malvids</taxon>
        <taxon>Brassicales</taxon>
        <taxon>Brassicaceae</taxon>
        <taxon>Camelineae</taxon>
        <taxon>Arabidopsis</taxon>
    </lineage>
</organism>
<keyword id="KW-0002">3D-structure</keyword>
<keyword id="KW-0378">Hydrolase</keyword>
<keyword id="KW-1185">Reference proteome</keyword>
<keyword id="KW-0719">Serine esterase</keyword>
<protein>
    <recommendedName>
        <fullName evidence="6">Carboxylesterase 20</fullName>
    </recommendedName>
    <alternativeName>
        <fullName evidence="6">AtCXE20</fullName>
        <ecNumber evidence="4">3.1.1.1</ecNumber>
    </alternativeName>
</protein>
<dbReference type="EC" id="3.1.1.1" evidence="4"/>
<dbReference type="EMBL" id="AB019235">
    <property type="protein sequence ID" value="BAA97182.1"/>
    <property type="molecule type" value="Genomic_DNA"/>
</dbReference>
<dbReference type="EMBL" id="CP002688">
    <property type="protein sequence ID" value="AED97578.1"/>
    <property type="molecule type" value="Genomic_DNA"/>
</dbReference>
<dbReference type="RefSeq" id="NP_201024.1">
    <property type="nucleotide sequence ID" value="NM_125612.3"/>
</dbReference>
<dbReference type="PDB" id="8VCE">
    <property type="method" value="X-ray"/>
    <property type="resolution" value="1.85 A"/>
    <property type="chains" value="A/B=1-327"/>
</dbReference>
<dbReference type="PDBsum" id="8VCE"/>
<dbReference type="SMR" id="Q9LVB8"/>
<dbReference type="FunCoup" id="Q9LVB8">
    <property type="interactions" value="301"/>
</dbReference>
<dbReference type="STRING" id="3702.Q9LVB8"/>
<dbReference type="ESTHER" id="arath-AT5G62180">
    <property type="family name" value="Plant_carboxylesterase"/>
</dbReference>
<dbReference type="MEROPS" id="S09.A14"/>
<dbReference type="PaxDb" id="3702-AT5G62180.1"/>
<dbReference type="ProteomicsDB" id="220514"/>
<dbReference type="EnsemblPlants" id="AT5G62180.1">
    <property type="protein sequence ID" value="AT5G62180.1"/>
    <property type="gene ID" value="AT5G62180"/>
</dbReference>
<dbReference type="GeneID" id="836339"/>
<dbReference type="Gramene" id="AT5G62180.1">
    <property type="protein sequence ID" value="AT5G62180.1"/>
    <property type="gene ID" value="AT5G62180"/>
</dbReference>
<dbReference type="KEGG" id="ath:AT5G62180"/>
<dbReference type="Araport" id="AT5G62180"/>
<dbReference type="TAIR" id="AT5G62180">
    <property type="gene designation" value="CXE20"/>
</dbReference>
<dbReference type="eggNOG" id="KOG1515">
    <property type="taxonomic scope" value="Eukaryota"/>
</dbReference>
<dbReference type="HOGENOM" id="CLU_012494_22_1_1"/>
<dbReference type="InParanoid" id="Q9LVB8"/>
<dbReference type="OMA" id="IGNCEDE"/>
<dbReference type="PhylomeDB" id="Q9LVB8"/>
<dbReference type="BioCyc" id="ARA:AT5G62180-MONOMER"/>
<dbReference type="PRO" id="PR:Q9LVB8"/>
<dbReference type="Proteomes" id="UP000006548">
    <property type="component" value="Chromosome 5"/>
</dbReference>
<dbReference type="ExpressionAtlas" id="Q9LVB8">
    <property type="expression patterns" value="baseline and differential"/>
</dbReference>
<dbReference type="GO" id="GO:0043722">
    <property type="term" value="F:4-hydroxyphenylacetate decarboxylase activity"/>
    <property type="evidence" value="ECO:0000314"/>
    <property type="project" value="TAIR"/>
</dbReference>
<dbReference type="GO" id="GO:0106435">
    <property type="term" value="F:carboxylesterase activity"/>
    <property type="evidence" value="ECO:0000314"/>
    <property type="project" value="UniProtKB"/>
</dbReference>
<dbReference type="GO" id="GO:2000032">
    <property type="term" value="P:regulation of secondary shoot formation"/>
    <property type="evidence" value="ECO:0000315"/>
    <property type="project" value="UniProtKB"/>
</dbReference>
<dbReference type="Gene3D" id="3.40.50.1820">
    <property type="entry name" value="alpha/beta hydrolase"/>
    <property type="match status" value="1"/>
</dbReference>
<dbReference type="InterPro" id="IPR013094">
    <property type="entry name" value="AB_hydrolase_3"/>
</dbReference>
<dbReference type="InterPro" id="IPR029058">
    <property type="entry name" value="AB_hydrolase_fold"/>
</dbReference>
<dbReference type="InterPro" id="IPR050466">
    <property type="entry name" value="Carboxylest/Gibb_receptor"/>
</dbReference>
<dbReference type="PANTHER" id="PTHR23024">
    <property type="entry name" value="ARYLACETAMIDE DEACETYLASE"/>
    <property type="match status" value="1"/>
</dbReference>
<dbReference type="PANTHER" id="PTHR23024:SF546">
    <property type="entry name" value="CARBOXYLESTERASE 120-RELATED"/>
    <property type="match status" value="1"/>
</dbReference>
<dbReference type="Pfam" id="PF07859">
    <property type="entry name" value="Abhydrolase_3"/>
    <property type="match status" value="1"/>
</dbReference>
<dbReference type="SUPFAM" id="SSF53474">
    <property type="entry name" value="alpha/beta-Hydrolases"/>
    <property type="match status" value="1"/>
</dbReference>
<accession>Q9LVB8</accession>
<evidence type="ECO:0000250" key="1">
    <source>
        <dbReference type="UniProtKB" id="Q5NUF3"/>
    </source>
</evidence>
<evidence type="ECO:0000250" key="2">
    <source>
        <dbReference type="UniProtKB" id="Q9FG13"/>
    </source>
</evidence>
<evidence type="ECO:0000269" key="3">
    <source>
    </source>
</evidence>
<evidence type="ECO:0000269" key="4">
    <source>
    </source>
</evidence>
<evidence type="ECO:0000269" key="5">
    <source>
    </source>
</evidence>
<evidence type="ECO:0000303" key="6">
    <source>
    </source>
</evidence>
<evidence type="ECO:0000305" key="7"/>
<evidence type="ECO:0000305" key="8">
    <source>
    </source>
</evidence>
<evidence type="ECO:0000312" key="9">
    <source>
        <dbReference type="Araport" id="AT5G62180"/>
    </source>
</evidence>
<evidence type="ECO:0000312" key="10">
    <source>
        <dbReference type="EMBL" id="BAA97182.1"/>
    </source>
</evidence>
<evidence type="ECO:0007829" key="11">
    <source>
        <dbReference type="PDB" id="8VCE"/>
    </source>
</evidence>
<proteinExistence type="evidence at protein level"/>
<comment type="function">
    <text evidence="4 5">Carboxylesterase that possesses esterase activity in vitro with the synthetic substrate p-nitrophenyl acetate (pNPA) (PubMed:33986761). Binds strigolactones, but is not able to hydrolyze them (PubMed:39090154). May be involved in the regulation of shoot branching (PubMed:33986761).</text>
</comment>
<comment type="catalytic activity">
    <reaction evidence="4">
        <text>a carboxylic ester + H2O = an alcohol + a carboxylate + H(+)</text>
        <dbReference type="Rhea" id="RHEA:21164"/>
        <dbReference type="ChEBI" id="CHEBI:15377"/>
        <dbReference type="ChEBI" id="CHEBI:15378"/>
        <dbReference type="ChEBI" id="CHEBI:29067"/>
        <dbReference type="ChEBI" id="CHEBI:30879"/>
        <dbReference type="ChEBI" id="CHEBI:33308"/>
        <dbReference type="EC" id="3.1.1.1"/>
    </reaction>
    <physiologicalReaction direction="left-to-right" evidence="8">
        <dbReference type="Rhea" id="RHEA:21165"/>
    </physiologicalReaction>
</comment>
<comment type="activity regulation">
    <text evidence="4">Esterase activity measured in vitro with the synthetic substrate p-nitrophenyl acetate (pNPA) is inhibited by strigolactone.</text>
</comment>
<comment type="biophysicochemical properties">
    <kinetics>
        <KM evidence="4">251 uM for the synthetic substrate p-nitrophenyl acetate (pNPA)</KM>
        <Vmax evidence="4">29.0 umol/min/mg enzyme toward the synthetic substrate p-nitrophenyl acetate (pNPA)</Vmax>
    </kinetics>
</comment>
<comment type="tissue specificity">
    <text evidence="3">Expressed in roots, stems, flowers and siliques.</text>
</comment>
<comment type="miscellaneous">
    <text evidence="4">Gain-of-function mutant (T-DNA tagging) exhibits increased branching and decreased sensitivity to ethylene.</text>
</comment>
<comment type="similarity">
    <text evidence="7">Belongs to the 'GDXG' lipolytic enzyme family.</text>
</comment>